<feature type="chain" id="PRO_0000182988" description="Nodulation protein J">
    <location>
        <begin position="1"/>
        <end position="259"/>
    </location>
</feature>
<feature type="transmembrane region" description="Helical" evidence="2">
    <location>
        <begin position="32"/>
        <end position="52"/>
    </location>
</feature>
<feature type="transmembrane region" description="Helical" evidence="2">
    <location>
        <begin position="64"/>
        <end position="84"/>
    </location>
</feature>
<feature type="transmembrane region" description="Helical" evidence="2">
    <location>
        <begin position="116"/>
        <end position="136"/>
    </location>
</feature>
<feature type="transmembrane region" description="Helical" evidence="2">
    <location>
        <begin position="141"/>
        <end position="161"/>
    </location>
</feature>
<feature type="transmembrane region" description="Helical" evidence="2">
    <location>
        <begin position="174"/>
        <end position="194"/>
    </location>
</feature>
<feature type="transmembrane region" description="Helical" evidence="2">
    <location>
        <begin position="228"/>
        <end position="248"/>
    </location>
</feature>
<feature type="domain" description="ABC transmembrane type-2" evidence="3">
    <location>
        <begin position="30"/>
        <end position="256"/>
    </location>
</feature>
<name>NODJ_RHILV</name>
<evidence type="ECO:0000250" key="1"/>
<evidence type="ECO:0000255" key="2"/>
<evidence type="ECO:0000255" key="3">
    <source>
        <dbReference type="PROSITE-ProRule" id="PRU00442"/>
    </source>
</evidence>
<evidence type="ECO:0000305" key="4"/>
<dbReference type="EMBL" id="Y00548">
    <property type="protein sequence ID" value="CAA68617.1"/>
    <property type="molecule type" value="Genomic_DNA"/>
</dbReference>
<dbReference type="EMBL" id="X07990">
    <property type="protein sequence ID" value="CAA30798.1"/>
    <property type="molecule type" value="Genomic_DNA"/>
</dbReference>
<dbReference type="PIR" id="S10231">
    <property type="entry name" value="S10231"/>
</dbReference>
<dbReference type="SMR" id="P06755"/>
<dbReference type="GO" id="GO:0043190">
    <property type="term" value="C:ATP-binding cassette (ABC) transporter complex"/>
    <property type="evidence" value="ECO:0007669"/>
    <property type="project" value="InterPro"/>
</dbReference>
<dbReference type="GO" id="GO:0140359">
    <property type="term" value="F:ABC-type transporter activity"/>
    <property type="evidence" value="ECO:0007669"/>
    <property type="project" value="InterPro"/>
</dbReference>
<dbReference type="GO" id="GO:0015772">
    <property type="term" value="P:oligosaccharide transport"/>
    <property type="evidence" value="ECO:0007669"/>
    <property type="project" value="InterPro"/>
</dbReference>
<dbReference type="InterPro" id="IPR013525">
    <property type="entry name" value="ABC2_TM"/>
</dbReference>
<dbReference type="InterPro" id="IPR047817">
    <property type="entry name" value="ABC2_TM_bact-type"/>
</dbReference>
<dbReference type="InterPro" id="IPR000412">
    <property type="entry name" value="ABC_2_transport"/>
</dbReference>
<dbReference type="InterPro" id="IPR005981">
    <property type="entry name" value="ABC_transptNodJ"/>
</dbReference>
<dbReference type="InterPro" id="IPR051784">
    <property type="entry name" value="Nod_factor_ABC_transporter"/>
</dbReference>
<dbReference type="NCBIfam" id="TIGR01291">
    <property type="entry name" value="nodJ"/>
    <property type="match status" value="1"/>
</dbReference>
<dbReference type="PANTHER" id="PTHR43229">
    <property type="entry name" value="NODULATION PROTEIN J"/>
    <property type="match status" value="1"/>
</dbReference>
<dbReference type="PANTHER" id="PTHR43229:SF2">
    <property type="entry name" value="NODULATION PROTEIN J"/>
    <property type="match status" value="1"/>
</dbReference>
<dbReference type="Pfam" id="PF01061">
    <property type="entry name" value="ABC2_membrane"/>
    <property type="match status" value="1"/>
</dbReference>
<dbReference type="PIRSF" id="PIRSF006648">
    <property type="entry name" value="DrrB"/>
    <property type="match status" value="1"/>
</dbReference>
<dbReference type="PRINTS" id="PR00164">
    <property type="entry name" value="ABC2TRNSPORT"/>
</dbReference>
<dbReference type="PROSITE" id="PS51012">
    <property type="entry name" value="ABC_TM2"/>
    <property type="match status" value="1"/>
</dbReference>
<gene>
    <name type="primary">nodJ</name>
</gene>
<geneLocation type="plasmid">
    <name>sym pRL1JI</name>
</geneLocation>
<keyword id="KW-0997">Cell inner membrane</keyword>
<keyword id="KW-1003">Cell membrane</keyword>
<keyword id="KW-0472">Membrane</keyword>
<keyword id="KW-0536">Nodulation</keyword>
<keyword id="KW-0614">Plasmid</keyword>
<keyword id="KW-0812">Transmembrane</keyword>
<keyword id="KW-1133">Transmembrane helix</keyword>
<keyword id="KW-0813">Transport</keyword>
<proteinExistence type="inferred from homology"/>
<reference key="1">
    <citation type="journal article" date="1986" name="Gene">
        <title>The nodI gene product of Rhizobium leguminosarum is closely related to ATP-binding bacterial transport proteins; nucleotide sequence analysis of the nodI and nodJ genes.</title>
        <authorList>
            <person name="Evans I.J."/>
            <person name="Downie J.A."/>
        </authorList>
    </citation>
    <scope>NUCLEOTIDE SEQUENCE [GENOMIC DNA]</scope>
    <source>
        <strain>248</strain>
    </source>
</reference>
<reference key="2">
    <citation type="journal article" date="1988" name="Mol. Gen. Genet.">
        <title>Identification of nodX, a gene that allows Rhizobium leguminosarum biovar viciae strain TOM to nodulate Afghanistan peas.</title>
        <authorList>
            <person name="Davis E.O."/>
            <person name="Evans I.J."/>
            <person name="Johnston A.W.B."/>
        </authorList>
    </citation>
    <scope>NUCLEOTIDE SEQUENCE [GENOMIC DNA] OF 217-259</scope>
    <source>
        <strain>TOM</strain>
    </source>
</reference>
<sequence>MGVATLPAGGLNWLAVWRRNYLAWKKAALASILGNLADPVIYLFGLGAGLGVMVGRVDGVSYTAFLAAGMIATSAMTAATFETIYAAFGRMQGQRTWEAMLYTQLTQGDIVVGEMAWAATKASLAGTGIGIVAAMLGYTHWLALLYALPVIAITGLAFASLGMVVTALAPSYDYFIFYQTLVITPMLFLSGAVFPVDQLPVAFQQIAAFLPLAHSIDLIRPTMLGQPIANVCLHIGVLCIYIVVPFLVSTALLRRRLMR</sequence>
<protein>
    <recommendedName>
        <fullName>Nodulation protein J</fullName>
    </recommendedName>
</protein>
<accession>P06755</accession>
<comment type="function">
    <text evidence="1">Part of the ABC transporter complex NodIJ involved in the export of the nodulation factors (Nod factors), the bacterial signal molecules that induce symbiosis and subsequent nodulation induction. Nod factors are LCO (lipo-chitin oligosaccharide), a modified beta-1,4-linked N-acetylglucosamine oligosaccharide. This subunit encodes the transporter (By similarity).</text>
</comment>
<comment type="subunit">
    <text evidence="4">The complex is composed of two ATP-binding proteins (NodI) and two transmembrane proteins (NodJ).</text>
</comment>
<comment type="subcellular location">
    <subcellularLocation>
        <location evidence="4">Cell inner membrane</location>
        <topology evidence="4">Multi-pass membrane protein</topology>
    </subcellularLocation>
</comment>
<comment type="similarity">
    <text evidence="4">Belongs to the ABC-2 integral membrane protein family. Lipooligosaccharide exporter (TC 3.A.1.102) subfamily.</text>
</comment>
<organism>
    <name type="scientific">Rhizobium leguminosarum bv. viciae</name>
    <dbReference type="NCBI Taxonomy" id="387"/>
    <lineage>
        <taxon>Bacteria</taxon>
        <taxon>Pseudomonadati</taxon>
        <taxon>Pseudomonadota</taxon>
        <taxon>Alphaproteobacteria</taxon>
        <taxon>Hyphomicrobiales</taxon>
        <taxon>Rhizobiaceae</taxon>
        <taxon>Rhizobium/Agrobacterium group</taxon>
        <taxon>Rhizobium</taxon>
    </lineage>
</organism>